<keyword id="KW-0903">Direct protein sequencing</keyword>
<keyword id="KW-1015">Disulfide bond</keyword>
<keyword id="KW-0325">Glycoprotein</keyword>
<keyword id="KW-0646">Protease inhibitor</keyword>
<keyword id="KW-0677">Repeat</keyword>
<keyword id="KW-0964">Secreted</keyword>
<keyword id="KW-0722">Serine protease inhibitor</keyword>
<sequence length="54" mass="5870">VATVDCSDYPRPDCTLEYMPLCGSDNKTYGNKCNFCNAVVDSNGTLTLSHFGKC</sequence>
<dbReference type="PIR" id="F31444">
    <property type="entry name" value="F31444"/>
</dbReference>
<dbReference type="PIR" id="G31444">
    <property type="entry name" value="G31444"/>
</dbReference>
<dbReference type="SMR" id="P05569"/>
<dbReference type="GO" id="GO:0005576">
    <property type="term" value="C:extracellular region"/>
    <property type="evidence" value="ECO:0007669"/>
    <property type="project" value="UniProtKB-SubCell"/>
</dbReference>
<dbReference type="GO" id="GO:0004867">
    <property type="term" value="F:serine-type endopeptidase inhibitor activity"/>
    <property type="evidence" value="ECO:0007669"/>
    <property type="project" value="UniProtKB-KW"/>
</dbReference>
<dbReference type="CDD" id="cd00104">
    <property type="entry name" value="KAZAL_FS"/>
    <property type="match status" value="1"/>
</dbReference>
<dbReference type="FunFam" id="3.30.60.30:FF:000037">
    <property type="entry name" value="Ovomucoid"/>
    <property type="match status" value="1"/>
</dbReference>
<dbReference type="Gene3D" id="3.30.60.30">
    <property type="match status" value="1"/>
</dbReference>
<dbReference type="InterPro" id="IPR050159">
    <property type="entry name" value="Kazal-type_SerProtInhib"/>
</dbReference>
<dbReference type="InterPro" id="IPR002350">
    <property type="entry name" value="Kazal_dom"/>
</dbReference>
<dbReference type="InterPro" id="IPR036058">
    <property type="entry name" value="Kazal_dom_sf"/>
</dbReference>
<dbReference type="InterPro" id="IPR001239">
    <property type="entry name" value="Prot_inh_Kazal-m"/>
</dbReference>
<dbReference type="PANTHER" id="PTHR47499:SF1">
    <property type="entry name" value="SERINE PROTEASE INHIBITOR KAZAL-TYPE 7"/>
    <property type="match status" value="1"/>
</dbReference>
<dbReference type="PANTHER" id="PTHR47499">
    <property type="entry name" value="SERINE PROTEASE INHIBITOR KAZAL-TYPE 7 SPINK7"/>
    <property type="match status" value="1"/>
</dbReference>
<dbReference type="Pfam" id="PF00050">
    <property type="entry name" value="Kazal_1"/>
    <property type="match status" value="1"/>
</dbReference>
<dbReference type="PRINTS" id="PR00290">
    <property type="entry name" value="KAZALINHBTR"/>
</dbReference>
<dbReference type="SMART" id="SM00280">
    <property type="entry name" value="KAZAL"/>
    <property type="match status" value="1"/>
</dbReference>
<dbReference type="SUPFAM" id="SSF100895">
    <property type="entry name" value="Kazal-type serine protease inhibitors"/>
    <property type="match status" value="1"/>
</dbReference>
<dbReference type="PROSITE" id="PS00282">
    <property type="entry name" value="KAZAL_1"/>
    <property type="match status" value="1"/>
</dbReference>
<dbReference type="PROSITE" id="PS51465">
    <property type="entry name" value="KAZAL_2"/>
    <property type="match status" value="1"/>
</dbReference>
<evidence type="ECO:0000255" key="1">
    <source>
        <dbReference type="PROSITE-ProRule" id="PRU00798"/>
    </source>
</evidence>
<feature type="chain" id="PRO_0000073105" description="Ovomucoid">
    <location>
        <begin position="1" status="less than"/>
        <end position="54" status="greater than"/>
    </location>
</feature>
<feature type="domain" description="Kazal-like" evidence="1">
    <location>
        <begin position="4"/>
        <end position="54"/>
    </location>
</feature>
<feature type="site" description="Reactive bond 3">
    <location>
        <begin position="16"/>
        <end position="17"/>
    </location>
</feature>
<feature type="glycosylation site" description="N-linked (GlcNAc...) asparagine">
    <location>
        <position position="43"/>
    </location>
</feature>
<feature type="disulfide bond">
    <location>
        <begin position="6"/>
        <end position="36"/>
    </location>
</feature>
<feature type="disulfide bond">
    <location>
        <begin position="14"/>
        <end position="33"/>
    </location>
</feature>
<feature type="disulfide bond">
    <location>
        <begin position="22"/>
        <end position="54"/>
    </location>
</feature>
<feature type="sequence variant">
    <original>D</original>
    <variation>E</variation>
    <location>
        <position position="8"/>
    </location>
</feature>
<feature type="non-terminal residue">
    <location>
        <position position="1"/>
    </location>
</feature>
<feature type="non-terminal residue">
    <location>
        <position position="54"/>
    </location>
</feature>
<comment type="subcellular location">
    <subcellularLocation>
        <location>Secreted</location>
    </subcellularLocation>
</comment>
<comment type="domain">
    <text>Avian ovomucoid consists of three homologous, tandem Kazal family inhibitory domains.</text>
</comment>
<name>IOVO_DENEY</name>
<proteinExistence type="evidence at protein level"/>
<organism>
    <name type="scientific">Dendrocygna eytoni</name>
    <name type="common">Plumed whistling-duck</name>
    <dbReference type="NCBI Taxonomy" id="8875"/>
    <lineage>
        <taxon>Eukaryota</taxon>
        <taxon>Metazoa</taxon>
        <taxon>Chordata</taxon>
        <taxon>Craniata</taxon>
        <taxon>Vertebrata</taxon>
        <taxon>Euteleostomi</taxon>
        <taxon>Archelosauria</taxon>
        <taxon>Archosauria</taxon>
        <taxon>Dinosauria</taxon>
        <taxon>Saurischia</taxon>
        <taxon>Theropoda</taxon>
        <taxon>Coelurosauria</taxon>
        <taxon>Aves</taxon>
        <taxon>Neognathae</taxon>
        <taxon>Galloanserae</taxon>
        <taxon>Anseriformes</taxon>
        <taxon>Anatidae</taxon>
        <taxon>Dendrocygninae</taxon>
        <taxon>Dendrocygna</taxon>
    </lineage>
</organism>
<reference key="1">
    <citation type="journal article" date="1987" name="Biochemistry">
        <title>Ovomucoid third domains from 100 avian species: isolation, sequences, and hypervariability of enzyme-inhibitor contact residues.</title>
        <authorList>
            <person name="Laskowski M. Jr."/>
            <person name="Kato I."/>
            <person name="Ardelt W."/>
            <person name="Cook J."/>
            <person name="Denton A."/>
            <person name="Empie M.W."/>
            <person name="Kohr W.J."/>
            <person name="Park S.J."/>
            <person name="Parks K."/>
            <person name="Schatzley B.L."/>
            <person name="Schoenberger O.L."/>
            <person name="Tashiro M."/>
            <person name="Vichot G."/>
            <person name="Whatley H.E."/>
            <person name="Wieczorek A."/>
            <person name="Wieczorek M."/>
        </authorList>
    </citation>
    <scope>PROTEIN SEQUENCE</scope>
</reference>
<protein>
    <recommendedName>
        <fullName>Ovomucoid</fullName>
    </recommendedName>
</protein>
<accession>P05569</accession>